<sequence>MEMQMSNSDRYRIEHDSMGDLRVPIDALWGAQTQRAIENFPISGRSMPQGFIHALGFIKAAAAKVNAELGLLPKSMAKEIEAAALDVAAGRYDAEFPVDIYQTGSGTSSNMNANEVIATLAMRATKGPIHPNDHVNLGQSSNDVVPTAIRISATLAVQGRLLPALKHLRKMINKRARGLGSVVKTGRTHLMDAMPLTFAQEFGAWSAQIVSAEARLNDTLKRLHRLPLGGTAIGTGINTDPHFGRNAVKVLSALTGIHFESANNKFEGLAAQDDLVELSGQFNTLAVALMKIANDLRWMNAGPLAGLGEIELPALQPGSSIMPGKVNPVIPEAVVMVASQVIGHHTAVTVAGQSGNFQLNVTLPLIAYNLLESATLLGNVVMLLADKVIVGLKVRQDRVQEVLERNPILVTALNPIIGYEKAAVIAKRAYKEHRPVLEVACEESNLNPVELARLLDPAALTEGGIHVVGGGGG</sequence>
<feature type="chain" id="PRO_0000161330" description="Fumarate hydratase class II">
    <location>
        <begin position="1"/>
        <end position="473"/>
    </location>
</feature>
<feature type="active site" description="Proton donor/acceptor" evidence="1">
    <location>
        <position position="189"/>
    </location>
</feature>
<feature type="active site" evidence="1">
    <location>
        <position position="319"/>
    </location>
</feature>
<feature type="binding site" evidence="1">
    <location>
        <begin position="105"/>
        <end position="107"/>
    </location>
    <ligand>
        <name>substrate</name>
    </ligand>
</feature>
<feature type="binding site" description="in site B" evidence="1">
    <location>
        <begin position="130"/>
        <end position="133"/>
    </location>
    <ligand>
        <name>substrate</name>
    </ligand>
</feature>
<feature type="binding site" evidence="1">
    <location>
        <begin position="140"/>
        <end position="142"/>
    </location>
    <ligand>
        <name>substrate</name>
    </ligand>
</feature>
<feature type="binding site" evidence="1">
    <location>
        <position position="188"/>
    </location>
    <ligand>
        <name>substrate</name>
    </ligand>
</feature>
<feature type="binding site" evidence="1">
    <location>
        <position position="320"/>
    </location>
    <ligand>
        <name>substrate</name>
    </ligand>
</feature>
<feature type="binding site" evidence="1">
    <location>
        <begin position="325"/>
        <end position="327"/>
    </location>
    <ligand>
        <name>substrate</name>
    </ligand>
</feature>
<feature type="site" description="Important for catalytic activity" evidence="1">
    <location>
        <position position="332"/>
    </location>
</feature>
<name>FUMC_XYLFT</name>
<reference key="1">
    <citation type="journal article" date="2003" name="J. Bacteriol.">
        <title>Comparative analyses of the complete genome sequences of Pierce's disease and citrus variegated chlorosis strains of Xylella fastidiosa.</title>
        <authorList>
            <person name="Van Sluys M.A."/>
            <person name="de Oliveira M.C."/>
            <person name="Monteiro-Vitorello C.B."/>
            <person name="Miyaki C.Y."/>
            <person name="Furlan L.R."/>
            <person name="Camargo L.E.A."/>
            <person name="da Silva A.C.R."/>
            <person name="Moon D.H."/>
            <person name="Takita M.A."/>
            <person name="Lemos E.G.M."/>
            <person name="Machado M.A."/>
            <person name="Ferro M.I.T."/>
            <person name="da Silva F.R."/>
            <person name="Goldman M.H.S."/>
            <person name="Goldman G.H."/>
            <person name="Lemos M.V.F."/>
            <person name="El-Dorry H."/>
            <person name="Tsai S.M."/>
            <person name="Carrer H."/>
            <person name="Carraro D.M."/>
            <person name="de Oliveira R.C."/>
            <person name="Nunes L.R."/>
            <person name="Siqueira W.J."/>
            <person name="Coutinho L.L."/>
            <person name="Kimura E.T."/>
            <person name="Ferro E.S."/>
            <person name="Harakava R."/>
            <person name="Kuramae E.E."/>
            <person name="Marino C.L."/>
            <person name="Giglioti E."/>
            <person name="Abreu I.L."/>
            <person name="Alves L.M.C."/>
            <person name="do Amaral A.M."/>
            <person name="Baia G.S."/>
            <person name="Blanco S.R."/>
            <person name="Brito M.S."/>
            <person name="Cannavan F.S."/>
            <person name="Celestino A.V."/>
            <person name="da Cunha A.F."/>
            <person name="Fenille R.C."/>
            <person name="Ferro J.A."/>
            <person name="Formighieri E.F."/>
            <person name="Kishi L.T."/>
            <person name="Leoni S.G."/>
            <person name="Oliveira A.R."/>
            <person name="Rosa V.E. Jr."/>
            <person name="Sassaki F.T."/>
            <person name="Sena J.A.D."/>
            <person name="de Souza A.A."/>
            <person name="Truffi D."/>
            <person name="Tsukumo F."/>
            <person name="Yanai G.M."/>
            <person name="Zaros L.G."/>
            <person name="Civerolo E.L."/>
            <person name="Simpson A.J.G."/>
            <person name="Almeida N.F. Jr."/>
            <person name="Setubal J.C."/>
            <person name="Kitajima J.P."/>
        </authorList>
    </citation>
    <scope>NUCLEOTIDE SEQUENCE [LARGE SCALE GENOMIC DNA]</scope>
    <source>
        <strain>Temecula1 / ATCC 700964</strain>
    </source>
</reference>
<proteinExistence type="inferred from homology"/>
<evidence type="ECO:0000255" key="1">
    <source>
        <dbReference type="HAMAP-Rule" id="MF_00743"/>
    </source>
</evidence>
<dbReference type="EC" id="4.2.1.2" evidence="1"/>
<dbReference type="EMBL" id="AE009442">
    <property type="protein sequence ID" value="AAO28632.1"/>
    <property type="molecule type" value="Genomic_DNA"/>
</dbReference>
<dbReference type="SMR" id="Q87DC2"/>
<dbReference type="KEGG" id="xft:PD_0763"/>
<dbReference type="HOGENOM" id="CLU_021594_4_1_6"/>
<dbReference type="UniPathway" id="UPA00223">
    <property type="reaction ID" value="UER01007"/>
</dbReference>
<dbReference type="Proteomes" id="UP000002516">
    <property type="component" value="Chromosome"/>
</dbReference>
<dbReference type="GO" id="GO:0005737">
    <property type="term" value="C:cytoplasm"/>
    <property type="evidence" value="ECO:0007669"/>
    <property type="project" value="UniProtKB-SubCell"/>
</dbReference>
<dbReference type="GO" id="GO:0004333">
    <property type="term" value="F:fumarate hydratase activity"/>
    <property type="evidence" value="ECO:0007669"/>
    <property type="project" value="UniProtKB-UniRule"/>
</dbReference>
<dbReference type="GO" id="GO:0006106">
    <property type="term" value="P:fumarate metabolic process"/>
    <property type="evidence" value="ECO:0007669"/>
    <property type="project" value="InterPro"/>
</dbReference>
<dbReference type="GO" id="GO:0006099">
    <property type="term" value="P:tricarboxylic acid cycle"/>
    <property type="evidence" value="ECO:0007669"/>
    <property type="project" value="UniProtKB-UniRule"/>
</dbReference>
<dbReference type="CDD" id="cd01362">
    <property type="entry name" value="Fumarase_classII"/>
    <property type="match status" value="1"/>
</dbReference>
<dbReference type="FunFam" id="1.10.40.30:FF:000002">
    <property type="entry name" value="Fumarate hydratase class II"/>
    <property type="match status" value="1"/>
</dbReference>
<dbReference type="FunFam" id="1.10.275.10:FF:000001">
    <property type="entry name" value="Fumarate hydratase, mitochondrial"/>
    <property type="match status" value="1"/>
</dbReference>
<dbReference type="FunFam" id="1.20.200.10:FF:000001">
    <property type="entry name" value="Fumarate hydratase, mitochondrial"/>
    <property type="match status" value="1"/>
</dbReference>
<dbReference type="Gene3D" id="1.10.40.30">
    <property type="entry name" value="Fumarase/aspartase (C-terminal domain)"/>
    <property type="match status" value="1"/>
</dbReference>
<dbReference type="Gene3D" id="1.20.200.10">
    <property type="entry name" value="Fumarase/aspartase (Central domain)"/>
    <property type="match status" value="1"/>
</dbReference>
<dbReference type="Gene3D" id="1.10.275.10">
    <property type="entry name" value="Fumarase/aspartase (N-terminal domain)"/>
    <property type="match status" value="1"/>
</dbReference>
<dbReference type="HAMAP" id="MF_00743">
    <property type="entry name" value="FumaraseC"/>
    <property type="match status" value="1"/>
</dbReference>
<dbReference type="InterPro" id="IPR005677">
    <property type="entry name" value="Fum_hydII"/>
</dbReference>
<dbReference type="InterPro" id="IPR024083">
    <property type="entry name" value="Fumarase/histidase_N"/>
</dbReference>
<dbReference type="InterPro" id="IPR018951">
    <property type="entry name" value="Fumarase_C_C"/>
</dbReference>
<dbReference type="InterPro" id="IPR020557">
    <property type="entry name" value="Fumarate_lyase_CS"/>
</dbReference>
<dbReference type="InterPro" id="IPR000362">
    <property type="entry name" value="Fumarate_lyase_fam"/>
</dbReference>
<dbReference type="InterPro" id="IPR022761">
    <property type="entry name" value="Fumarate_lyase_N"/>
</dbReference>
<dbReference type="InterPro" id="IPR008948">
    <property type="entry name" value="L-Aspartase-like"/>
</dbReference>
<dbReference type="NCBIfam" id="NF008909">
    <property type="entry name" value="PRK12273.1"/>
    <property type="match status" value="1"/>
</dbReference>
<dbReference type="PANTHER" id="PTHR11444">
    <property type="entry name" value="ASPARTATEAMMONIA/ARGININOSUCCINATE/ADENYLOSUCCINATE LYASE"/>
    <property type="match status" value="1"/>
</dbReference>
<dbReference type="PANTHER" id="PTHR11444:SF22">
    <property type="entry name" value="FUMARATE HYDRATASE CLASS II"/>
    <property type="match status" value="1"/>
</dbReference>
<dbReference type="Pfam" id="PF10415">
    <property type="entry name" value="FumaraseC_C"/>
    <property type="match status" value="1"/>
</dbReference>
<dbReference type="Pfam" id="PF00206">
    <property type="entry name" value="Lyase_1"/>
    <property type="match status" value="1"/>
</dbReference>
<dbReference type="PRINTS" id="PR00145">
    <property type="entry name" value="ARGSUCLYASE"/>
</dbReference>
<dbReference type="PRINTS" id="PR00149">
    <property type="entry name" value="FUMRATELYASE"/>
</dbReference>
<dbReference type="SUPFAM" id="SSF48557">
    <property type="entry name" value="L-aspartase-like"/>
    <property type="match status" value="1"/>
</dbReference>
<dbReference type="PROSITE" id="PS00163">
    <property type="entry name" value="FUMARATE_LYASES"/>
    <property type="match status" value="1"/>
</dbReference>
<accession>Q87DC2</accession>
<gene>
    <name evidence="1" type="primary">fumC</name>
    <name type="ordered locus">PD_0763</name>
</gene>
<comment type="function">
    <text evidence="1">Involved in the TCA cycle. Catalyzes the stereospecific interconversion of fumarate to L-malate.</text>
</comment>
<comment type="catalytic activity">
    <reaction evidence="1">
        <text>(S)-malate = fumarate + H2O</text>
        <dbReference type="Rhea" id="RHEA:12460"/>
        <dbReference type="ChEBI" id="CHEBI:15377"/>
        <dbReference type="ChEBI" id="CHEBI:15589"/>
        <dbReference type="ChEBI" id="CHEBI:29806"/>
        <dbReference type="EC" id="4.2.1.2"/>
    </reaction>
</comment>
<comment type="pathway">
    <text evidence="1">Carbohydrate metabolism; tricarboxylic acid cycle; (S)-malate from fumarate: step 1/1.</text>
</comment>
<comment type="subunit">
    <text evidence="1">Homotetramer.</text>
</comment>
<comment type="subcellular location">
    <subcellularLocation>
        <location evidence="1">Cytoplasm</location>
    </subcellularLocation>
</comment>
<comment type="miscellaneous">
    <text evidence="1">There are 2 substrate-binding sites: the catalytic A site, and the non-catalytic B site that may play a role in the transfer of substrate or product between the active site and the solvent. Alternatively, the B site may bind allosteric effectors.</text>
</comment>
<comment type="similarity">
    <text evidence="1">Belongs to the class-II fumarase/aspartase family. Fumarase subfamily.</text>
</comment>
<protein>
    <recommendedName>
        <fullName evidence="1">Fumarate hydratase class II</fullName>
        <shortName evidence="1">Fumarase C</shortName>
        <ecNumber evidence="1">4.2.1.2</ecNumber>
    </recommendedName>
    <alternativeName>
        <fullName evidence="1">Aerobic fumarase</fullName>
    </alternativeName>
    <alternativeName>
        <fullName evidence="1">Iron-independent fumarase</fullName>
    </alternativeName>
</protein>
<keyword id="KW-0963">Cytoplasm</keyword>
<keyword id="KW-0456">Lyase</keyword>
<keyword id="KW-1185">Reference proteome</keyword>
<keyword id="KW-0816">Tricarboxylic acid cycle</keyword>
<organism>
    <name type="scientific">Xylella fastidiosa (strain Temecula1 / ATCC 700964)</name>
    <dbReference type="NCBI Taxonomy" id="183190"/>
    <lineage>
        <taxon>Bacteria</taxon>
        <taxon>Pseudomonadati</taxon>
        <taxon>Pseudomonadota</taxon>
        <taxon>Gammaproteobacteria</taxon>
        <taxon>Lysobacterales</taxon>
        <taxon>Lysobacteraceae</taxon>
        <taxon>Xylella</taxon>
    </lineage>
</organism>